<feature type="chain" id="PRO_0000148621" description="Argininosuccinate synthase">
    <location>
        <begin position="1"/>
        <end position="404"/>
    </location>
</feature>
<feature type="binding site" evidence="1">
    <location>
        <begin position="12"/>
        <end position="20"/>
    </location>
    <ligand>
        <name>ATP</name>
        <dbReference type="ChEBI" id="CHEBI:30616"/>
    </ligand>
</feature>
<feature type="binding site" evidence="1">
    <location>
        <position position="40"/>
    </location>
    <ligand>
        <name>ATP</name>
        <dbReference type="ChEBI" id="CHEBI:30616"/>
    </ligand>
</feature>
<feature type="binding site" evidence="1">
    <location>
        <position position="92"/>
    </location>
    <ligand>
        <name>L-citrulline</name>
        <dbReference type="ChEBI" id="CHEBI:57743"/>
    </ligand>
</feature>
<feature type="binding site" evidence="1">
    <location>
        <position position="97"/>
    </location>
    <ligand>
        <name>L-citrulline</name>
        <dbReference type="ChEBI" id="CHEBI:57743"/>
    </ligand>
</feature>
<feature type="binding site" evidence="1">
    <location>
        <position position="122"/>
    </location>
    <ligand>
        <name>ATP</name>
        <dbReference type="ChEBI" id="CHEBI:30616"/>
    </ligand>
</feature>
<feature type="binding site" evidence="1">
    <location>
        <position position="124"/>
    </location>
    <ligand>
        <name>L-aspartate</name>
        <dbReference type="ChEBI" id="CHEBI:29991"/>
    </ligand>
</feature>
<feature type="binding site" evidence="1">
    <location>
        <position position="128"/>
    </location>
    <ligand>
        <name>L-aspartate</name>
        <dbReference type="ChEBI" id="CHEBI:29991"/>
    </ligand>
</feature>
<feature type="binding site" evidence="1">
    <location>
        <position position="128"/>
    </location>
    <ligand>
        <name>L-citrulline</name>
        <dbReference type="ChEBI" id="CHEBI:57743"/>
    </ligand>
</feature>
<feature type="binding site" evidence="1">
    <location>
        <position position="129"/>
    </location>
    <ligand>
        <name>L-aspartate</name>
        <dbReference type="ChEBI" id="CHEBI:29991"/>
    </ligand>
</feature>
<feature type="binding site" evidence="1">
    <location>
        <position position="132"/>
    </location>
    <ligand>
        <name>L-citrulline</name>
        <dbReference type="ChEBI" id="CHEBI:57743"/>
    </ligand>
</feature>
<feature type="binding site" evidence="1">
    <location>
        <position position="181"/>
    </location>
    <ligand>
        <name>L-citrulline</name>
        <dbReference type="ChEBI" id="CHEBI:57743"/>
    </ligand>
</feature>
<feature type="binding site" evidence="1">
    <location>
        <position position="190"/>
    </location>
    <ligand>
        <name>L-citrulline</name>
        <dbReference type="ChEBI" id="CHEBI:57743"/>
    </ligand>
</feature>
<feature type="binding site" evidence="1">
    <location>
        <position position="266"/>
    </location>
    <ligand>
        <name>L-citrulline</name>
        <dbReference type="ChEBI" id="CHEBI:57743"/>
    </ligand>
</feature>
<feature type="binding site" evidence="1">
    <location>
        <position position="278"/>
    </location>
    <ligand>
        <name>L-citrulline</name>
        <dbReference type="ChEBI" id="CHEBI:57743"/>
    </ligand>
</feature>
<name>ASSY_PHOLL</name>
<sequence>MHTKDIKKIVLAYSGGLDTSAIIPWLKEHYGNCEVVAFVADVGQSREDLEGVEQKALRSGASECHVVDLREEFIKDYVYPVLKTGALYEGSYLLGTSMARPIIAKAQVELALKVGADALAHGATGKGNDQVRFESTYTALAPQLKVVAPWREWDLRSREALLDYLKARDIPTTATLEKIYSRDENAWHISTEGGVLESTWNASNKDCWVWTVDPEEAPDEAELVSVMIEKGEVVGVNGKVMSPYQCLEALNILGVKHGIGRIDIVENRLVGMKSRGCYETPGGTIMMAALRGVEQLVLDRDSFKWRQQLGLEMSYVVYDGRWFAPLRRSIQAAAETLAADVSGEVVLKLYKGQVTAIQKRSTNSLYSEAFATFGEDEVYDHSHAAGFIRLYSLPSRIRALNSKE</sequence>
<protein>
    <recommendedName>
        <fullName evidence="1">Argininosuccinate synthase</fullName>
        <ecNumber evidence="1">6.3.4.5</ecNumber>
    </recommendedName>
    <alternativeName>
        <fullName evidence="1">Citrulline--aspartate ligase</fullName>
    </alternativeName>
</protein>
<comment type="catalytic activity">
    <reaction evidence="1">
        <text>L-citrulline + L-aspartate + ATP = 2-(N(omega)-L-arginino)succinate + AMP + diphosphate + H(+)</text>
        <dbReference type="Rhea" id="RHEA:10932"/>
        <dbReference type="ChEBI" id="CHEBI:15378"/>
        <dbReference type="ChEBI" id="CHEBI:29991"/>
        <dbReference type="ChEBI" id="CHEBI:30616"/>
        <dbReference type="ChEBI" id="CHEBI:33019"/>
        <dbReference type="ChEBI" id="CHEBI:57472"/>
        <dbReference type="ChEBI" id="CHEBI:57743"/>
        <dbReference type="ChEBI" id="CHEBI:456215"/>
        <dbReference type="EC" id="6.3.4.5"/>
    </reaction>
</comment>
<comment type="pathway">
    <text evidence="1">Amino-acid biosynthesis; L-arginine biosynthesis; L-arginine from L-ornithine and carbamoyl phosphate: step 2/3.</text>
</comment>
<comment type="subunit">
    <text evidence="1">Homotetramer.</text>
</comment>
<comment type="subcellular location">
    <subcellularLocation>
        <location evidence="1">Cytoplasm</location>
    </subcellularLocation>
</comment>
<comment type="similarity">
    <text evidence="1">Belongs to the argininosuccinate synthase family. Type 1 subfamily.</text>
</comment>
<proteinExistence type="inferred from homology"/>
<accession>Q7MYD8</accession>
<gene>
    <name evidence="1" type="primary">argG</name>
    <name type="ordered locus">plu4742</name>
</gene>
<keyword id="KW-0028">Amino-acid biosynthesis</keyword>
<keyword id="KW-0055">Arginine biosynthesis</keyword>
<keyword id="KW-0067">ATP-binding</keyword>
<keyword id="KW-0963">Cytoplasm</keyword>
<keyword id="KW-0436">Ligase</keyword>
<keyword id="KW-0547">Nucleotide-binding</keyword>
<keyword id="KW-1185">Reference proteome</keyword>
<evidence type="ECO:0000255" key="1">
    <source>
        <dbReference type="HAMAP-Rule" id="MF_00005"/>
    </source>
</evidence>
<dbReference type="EC" id="6.3.4.5" evidence="1"/>
<dbReference type="EMBL" id="BX571874">
    <property type="protein sequence ID" value="CAE17114.1"/>
    <property type="molecule type" value="Genomic_DNA"/>
</dbReference>
<dbReference type="RefSeq" id="WP_011148810.1">
    <property type="nucleotide sequence ID" value="NC_005126.1"/>
</dbReference>
<dbReference type="SMR" id="Q7MYD8"/>
<dbReference type="STRING" id="243265.plu4742"/>
<dbReference type="GeneID" id="48850977"/>
<dbReference type="KEGG" id="plu:plu4742"/>
<dbReference type="eggNOG" id="COG0137">
    <property type="taxonomic scope" value="Bacteria"/>
</dbReference>
<dbReference type="HOGENOM" id="CLU_032784_4_2_6"/>
<dbReference type="OrthoDB" id="9801641at2"/>
<dbReference type="UniPathway" id="UPA00068">
    <property type="reaction ID" value="UER00113"/>
</dbReference>
<dbReference type="Proteomes" id="UP000002514">
    <property type="component" value="Chromosome"/>
</dbReference>
<dbReference type="GO" id="GO:0005737">
    <property type="term" value="C:cytoplasm"/>
    <property type="evidence" value="ECO:0007669"/>
    <property type="project" value="UniProtKB-SubCell"/>
</dbReference>
<dbReference type="GO" id="GO:0004055">
    <property type="term" value="F:argininosuccinate synthase activity"/>
    <property type="evidence" value="ECO:0007669"/>
    <property type="project" value="UniProtKB-UniRule"/>
</dbReference>
<dbReference type="GO" id="GO:0005524">
    <property type="term" value="F:ATP binding"/>
    <property type="evidence" value="ECO:0007669"/>
    <property type="project" value="UniProtKB-UniRule"/>
</dbReference>
<dbReference type="GO" id="GO:0000053">
    <property type="term" value="P:argininosuccinate metabolic process"/>
    <property type="evidence" value="ECO:0007669"/>
    <property type="project" value="TreeGrafter"/>
</dbReference>
<dbReference type="GO" id="GO:0006526">
    <property type="term" value="P:L-arginine biosynthetic process"/>
    <property type="evidence" value="ECO:0007669"/>
    <property type="project" value="UniProtKB-UniRule"/>
</dbReference>
<dbReference type="GO" id="GO:0000050">
    <property type="term" value="P:urea cycle"/>
    <property type="evidence" value="ECO:0007669"/>
    <property type="project" value="TreeGrafter"/>
</dbReference>
<dbReference type="CDD" id="cd01999">
    <property type="entry name" value="ASS"/>
    <property type="match status" value="1"/>
</dbReference>
<dbReference type="FunFam" id="3.40.50.620:FF:000019">
    <property type="entry name" value="Argininosuccinate synthase"/>
    <property type="match status" value="1"/>
</dbReference>
<dbReference type="FunFam" id="3.90.1260.10:FF:000007">
    <property type="entry name" value="Argininosuccinate synthase"/>
    <property type="match status" value="1"/>
</dbReference>
<dbReference type="Gene3D" id="3.90.1260.10">
    <property type="entry name" value="Argininosuccinate synthetase, chain A, domain 2"/>
    <property type="match status" value="1"/>
</dbReference>
<dbReference type="Gene3D" id="3.40.50.620">
    <property type="entry name" value="HUPs"/>
    <property type="match status" value="1"/>
</dbReference>
<dbReference type="Gene3D" id="1.20.5.470">
    <property type="entry name" value="Single helix bin"/>
    <property type="match status" value="1"/>
</dbReference>
<dbReference type="HAMAP" id="MF_00005">
    <property type="entry name" value="Arg_succ_synth_type1"/>
    <property type="match status" value="1"/>
</dbReference>
<dbReference type="InterPro" id="IPR048268">
    <property type="entry name" value="Arginosuc_syn_C"/>
</dbReference>
<dbReference type="InterPro" id="IPR048267">
    <property type="entry name" value="Arginosuc_syn_N"/>
</dbReference>
<dbReference type="InterPro" id="IPR001518">
    <property type="entry name" value="Arginosuc_synth"/>
</dbReference>
<dbReference type="InterPro" id="IPR018223">
    <property type="entry name" value="Arginosuc_synth_CS"/>
</dbReference>
<dbReference type="InterPro" id="IPR023434">
    <property type="entry name" value="Arginosuc_synth_type_1_subfam"/>
</dbReference>
<dbReference type="InterPro" id="IPR024074">
    <property type="entry name" value="AS_cat/multimer_dom_body"/>
</dbReference>
<dbReference type="InterPro" id="IPR014729">
    <property type="entry name" value="Rossmann-like_a/b/a_fold"/>
</dbReference>
<dbReference type="NCBIfam" id="TIGR00032">
    <property type="entry name" value="argG"/>
    <property type="match status" value="1"/>
</dbReference>
<dbReference type="NCBIfam" id="NF001770">
    <property type="entry name" value="PRK00509.1"/>
    <property type="match status" value="1"/>
</dbReference>
<dbReference type="PANTHER" id="PTHR11587">
    <property type="entry name" value="ARGININOSUCCINATE SYNTHASE"/>
    <property type="match status" value="1"/>
</dbReference>
<dbReference type="PANTHER" id="PTHR11587:SF2">
    <property type="entry name" value="ARGININOSUCCINATE SYNTHASE"/>
    <property type="match status" value="1"/>
</dbReference>
<dbReference type="Pfam" id="PF20979">
    <property type="entry name" value="Arginosuc_syn_C"/>
    <property type="match status" value="1"/>
</dbReference>
<dbReference type="Pfam" id="PF00764">
    <property type="entry name" value="Arginosuc_synth"/>
    <property type="match status" value="1"/>
</dbReference>
<dbReference type="SUPFAM" id="SSF52402">
    <property type="entry name" value="Adenine nucleotide alpha hydrolases-like"/>
    <property type="match status" value="1"/>
</dbReference>
<dbReference type="SUPFAM" id="SSF69864">
    <property type="entry name" value="Argininosuccinate synthetase, C-terminal domain"/>
    <property type="match status" value="1"/>
</dbReference>
<dbReference type="PROSITE" id="PS00564">
    <property type="entry name" value="ARGININOSUCCIN_SYN_1"/>
    <property type="match status" value="1"/>
</dbReference>
<dbReference type="PROSITE" id="PS00565">
    <property type="entry name" value="ARGININOSUCCIN_SYN_2"/>
    <property type="match status" value="1"/>
</dbReference>
<organism>
    <name type="scientific">Photorhabdus laumondii subsp. laumondii (strain DSM 15139 / CIP 105565 / TT01)</name>
    <name type="common">Photorhabdus luminescens subsp. laumondii</name>
    <dbReference type="NCBI Taxonomy" id="243265"/>
    <lineage>
        <taxon>Bacteria</taxon>
        <taxon>Pseudomonadati</taxon>
        <taxon>Pseudomonadota</taxon>
        <taxon>Gammaproteobacteria</taxon>
        <taxon>Enterobacterales</taxon>
        <taxon>Morganellaceae</taxon>
        <taxon>Photorhabdus</taxon>
    </lineage>
</organism>
<reference key="1">
    <citation type="journal article" date="2003" name="Nat. Biotechnol.">
        <title>The genome sequence of the entomopathogenic bacterium Photorhabdus luminescens.</title>
        <authorList>
            <person name="Duchaud E."/>
            <person name="Rusniok C."/>
            <person name="Frangeul L."/>
            <person name="Buchrieser C."/>
            <person name="Givaudan A."/>
            <person name="Taourit S."/>
            <person name="Bocs S."/>
            <person name="Boursaux-Eude C."/>
            <person name="Chandler M."/>
            <person name="Charles J.-F."/>
            <person name="Dassa E."/>
            <person name="Derose R."/>
            <person name="Derzelle S."/>
            <person name="Freyssinet G."/>
            <person name="Gaudriault S."/>
            <person name="Medigue C."/>
            <person name="Lanois A."/>
            <person name="Powell K."/>
            <person name="Siguier P."/>
            <person name="Vincent R."/>
            <person name="Wingate V."/>
            <person name="Zouine M."/>
            <person name="Glaser P."/>
            <person name="Boemare N."/>
            <person name="Danchin A."/>
            <person name="Kunst F."/>
        </authorList>
    </citation>
    <scope>NUCLEOTIDE SEQUENCE [LARGE SCALE GENOMIC DNA]</scope>
    <source>
        <strain>DSM 15139 / CIP 105565 / TT01</strain>
    </source>
</reference>